<comment type="function">
    <text evidence="1">NQR complex catalyzes the reduction of ubiquinone-1 to ubiquinol by two successive reactions, coupled with the transport of Na(+) ions from the cytoplasm to the periplasm. The first step is catalyzed by NqrF, which accepts electrons from NADH and reduces ubiquinone-1 to ubisemiquinone by a one-electron transfer pathway.</text>
</comment>
<comment type="catalytic activity">
    <reaction evidence="1">
        <text>a ubiquinone + n Na(+)(in) + NADH + H(+) = a ubiquinol + n Na(+)(out) + NAD(+)</text>
        <dbReference type="Rhea" id="RHEA:47748"/>
        <dbReference type="Rhea" id="RHEA-COMP:9565"/>
        <dbReference type="Rhea" id="RHEA-COMP:9566"/>
        <dbReference type="ChEBI" id="CHEBI:15378"/>
        <dbReference type="ChEBI" id="CHEBI:16389"/>
        <dbReference type="ChEBI" id="CHEBI:17976"/>
        <dbReference type="ChEBI" id="CHEBI:29101"/>
        <dbReference type="ChEBI" id="CHEBI:57540"/>
        <dbReference type="ChEBI" id="CHEBI:57945"/>
        <dbReference type="EC" id="7.2.1.1"/>
    </reaction>
</comment>
<comment type="cofactor">
    <cofactor evidence="1">
        <name>[2Fe-2S] cluster</name>
        <dbReference type="ChEBI" id="CHEBI:190135"/>
    </cofactor>
    <text evidence="1">Binds 1 [2Fe-2S] cluster.</text>
</comment>
<comment type="cofactor">
    <cofactor evidence="1">
        <name>FAD</name>
        <dbReference type="ChEBI" id="CHEBI:57692"/>
    </cofactor>
</comment>
<comment type="subunit">
    <text evidence="1">Composed of six subunits; NqrA, NqrB, NqrC, NqrD, NqrE and NqrF.</text>
</comment>
<comment type="subcellular location">
    <subcellularLocation>
        <location evidence="1">Cell inner membrane</location>
        <topology evidence="1">Single-pass membrane protein</topology>
    </subcellularLocation>
</comment>
<comment type="similarity">
    <text evidence="1">Belongs to the NqrF family.</text>
</comment>
<organism>
    <name type="scientific">Pasteurella multocida (strain Pm70)</name>
    <dbReference type="NCBI Taxonomy" id="272843"/>
    <lineage>
        <taxon>Bacteria</taxon>
        <taxon>Pseudomonadati</taxon>
        <taxon>Pseudomonadota</taxon>
        <taxon>Gammaproteobacteria</taxon>
        <taxon>Pasteurellales</taxon>
        <taxon>Pasteurellaceae</taxon>
        <taxon>Pasteurella</taxon>
    </lineage>
</organism>
<keyword id="KW-0001">2Fe-2S</keyword>
<keyword id="KW-0997">Cell inner membrane</keyword>
<keyword id="KW-1003">Cell membrane</keyword>
<keyword id="KW-0274">FAD</keyword>
<keyword id="KW-0285">Flavoprotein</keyword>
<keyword id="KW-0406">Ion transport</keyword>
<keyword id="KW-0408">Iron</keyword>
<keyword id="KW-0411">Iron-sulfur</keyword>
<keyword id="KW-0472">Membrane</keyword>
<keyword id="KW-0479">Metal-binding</keyword>
<keyword id="KW-0520">NAD</keyword>
<keyword id="KW-1185">Reference proteome</keyword>
<keyword id="KW-0915">Sodium</keyword>
<keyword id="KW-0739">Sodium transport</keyword>
<keyword id="KW-1278">Translocase</keyword>
<keyword id="KW-0812">Transmembrane</keyword>
<keyword id="KW-1133">Transmembrane helix</keyword>
<keyword id="KW-0813">Transport</keyword>
<keyword id="KW-0830">Ubiquinone</keyword>
<proteinExistence type="inferred from homology"/>
<protein>
    <recommendedName>
        <fullName evidence="1">Na(+)-translocating NADH-quinone reductase subunit F</fullName>
        <shortName evidence="1">Na(+)-NQR subunit F</shortName>
        <shortName evidence="1">Na(+)-translocating NQR subunit F</shortName>
        <ecNumber evidence="1">7.2.1.1</ecNumber>
    </recommendedName>
    <alternativeName>
        <fullName evidence="1">NQR complex subunit F</fullName>
    </alternativeName>
    <alternativeName>
        <fullName evidence="1">NQR-1 subunit F</fullName>
    </alternativeName>
</protein>
<name>NQRF_PASMU</name>
<accession>Q9CLA6</accession>
<feature type="chain" id="PRO_0000074499" description="Na(+)-translocating NADH-quinone reductase subunit F">
    <location>
        <begin position="1"/>
        <end position="407"/>
    </location>
</feature>
<feature type="transmembrane region" description="Helical" evidence="1">
    <location>
        <begin position="3"/>
        <end position="23"/>
    </location>
</feature>
<feature type="domain" description="2Fe-2S ferredoxin-type" evidence="1">
    <location>
        <begin position="32"/>
        <end position="126"/>
    </location>
</feature>
<feature type="domain" description="FAD-binding FR-type" evidence="1">
    <location>
        <begin position="129"/>
        <end position="269"/>
    </location>
</feature>
<feature type="region of interest" description="Catalytic">
    <location>
        <begin position="272"/>
        <end position="389"/>
    </location>
</feature>
<feature type="binding site" evidence="1">
    <location>
        <position position="69"/>
    </location>
    <ligand>
        <name>[2Fe-2S] cluster</name>
        <dbReference type="ChEBI" id="CHEBI:190135"/>
    </ligand>
</feature>
<feature type="binding site" evidence="1">
    <location>
        <position position="75"/>
    </location>
    <ligand>
        <name>[2Fe-2S] cluster</name>
        <dbReference type="ChEBI" id="CHEBI:190135"/>
    </ligand>
</feature>
<feature type="binding site" evidence="1">
    <location>
        <position position="78"/>
    </location>
    <ligand>
        <name>[2Fe-2S] cluster</name>
        <dbReference type="ChEBI" id="CHEBI:190135"/>
    </ligand>
</feature>
<feature type="binding site" evidence="1">
    <location>
        <position position="110"/>
    </location>
    <ligand>
        <name>[2Fe-2S] cluster</name>
        <dbReference type="ChEBI" id="CHEBI:190135"/>
    </ligand>
</feature>
<gene>
    <name evidence="1" type="primary">nqrF</name>
    <name type="ordered locus">PM1333</name>
</gene>
<evidence type="ECO:0000255" key="1">
    <source>
        <dbReference type="HAMAP-Rule" id="MF_00430"/>
    </source>
</evidence>
<dbReference type="EC" id="7.2.1.1" evidence="1"/>
<dbReference type="EMBL" id="AE004439">
    <property type="protein sequence ID" value="AAK03417.1"/>
    <property type="molecule type" value="Genomic_DNA"/>
</dbReference>
<dbReference type="RefSeq" id="WP_005717819.1">
    <property type="nucleotide sequence ID" value="NC_002663.1"/>
</dbReference>
<dbReference type="SMR" id="Q9CLA6"/>
<dbReference type="STRING" id="272843.PM1333"/>
<dbReference type="EnsemblBacteria" id="AAK03417">
    <property type="protein sequence ID" value="AAK03417"/>
    <property type="gene ID" value="PM1333"/>
</dbReference>
<dbReference type="KEGG" id="pmu:PM1333"/>
<dbReference type="HOGENOM" id="CLU_003827_7_2_6"/>
<dbReference type="OrthoDB" id="9806195at2"/>
<dbReference type="Proteomes" id="UP000000809">
    <property type="component" value="Chromosome"/>
</dbReference>
<dbReference type="GO" id="GO:0005886">
    <property type="term" value="C:plasma membrane"/>
    <property type="evidence" value="ECO:0007669"/>
    <property type="project" value="UniProtKB-SubCell"/>
</dbReference>
<dbReference type="GO" id="GO:0051537">
    <property type="term" value="F:2 iron, 2 sulfur cluster binding"/>
    <property type="evidence" value="ECO:0007669"/>
    <property type="project" value="UniProtKB-KW"/>
</dbReference>
<dbReference type="GO" id="GO:0009055">
    <property type="term" value="F:electron transfer activity"/>
    <property type="evidence" value="ECO:0007669"/>
    <property type="project" value="UniProtKB-UniRule"/>
</dbReference>
<dbReference type="GO" id="GO:0046872">
    <property type="term" value="F:metal ion binding"/>
    <property type="evidence" value="ECO:0007669"/>
    <property type="project" value="UniProtKB-KW"/>
</dbReference>
<dbReference type="GO" id="GO:0016655">
    <property type="term" value="F:oxidoreductase activity, acting on NAD(P)H, quinone or similar compound as acceptor"/>
    <property type="evidence" value="ECO:0007669"/>
    <property type="project" value="InterPro"/>
</dbReference>
<dbReference type="GO" id="GO:0006814">
    <property type="term" value="P:sodium ion transport"/>
    <property type="evidence" value="ECO:0007669"/>
    <property type="project" value="UniProtKB-UniRule"/>
</dbReference>
<dbReference type="CDD" id="cd00207">
    <property type="entry name" value="fer2"/>
    <property type="match status" value="1"/>
</dbReference>
<dbReference type="CDD" id="cd06188">
    <property type="entry name" value="NADH_quinone_reductase"/>
    <property type="match status" value="1"/>
</dbReference>
<dbReference type="FunFam" id="2.40.30.10:FF:000064">
    <property type="entry name" value="Na(+)-translocating NADH-quinone reductase subunit F"/>
    <property type="match status" value="1"/>
</dbReference>
<dbReference type="FunFam" id="3.40.50.80:FF:000014">
    <property type="entry name" value="Na(+)-translocating NADH-quinone reductase subunit F"/>
    <property type="match status" value="1"/>
</dbReference>
<dbReference type="Gene3D" id="3.10.20.30">
    <property type="match status" value="1"/>
</dbReference>
<dbReference type="Gene3D" id="3.40.50.80">
    <property type="entry name" value="Nucleotide-binding domain of ferredoxin-NADP reductase (FNR) module"/>
    <property type="match status" value="1"/>
</dbReference>
<dbReference type="Gene3D" id="2.40.30.10">
    <property type="entry name" value="Translation factors"/>
    <property type="match status" value="1"/>
</dbReference>
<dbReference type="HAMAP" id="MF_00430">
    <property type="entry name" value="NqrF"/>
    <property type="match status" value="1"/>
</dbReference>
<dbReference type="InterPro" id="IPR036010">
    <property type="entry name" value="2Fe-2S_ferredoxin-like_sf"/>
</dbReference>
<dbReference type="InterPro" id="IPR001041">
    <property type="entry name" value="2Fe-2S_ferredoxin-type"/>
</dbReference>
<dbReference type="InterPro" id="IPR012675">
    <property type="entry name" value="Beta-grasp_dom_sf"/>
</dbReference>
<dbReference type="InterPro" id="IPR008333">
    <property type="entry name" value="Cbr1-like_FAD-bd_dom"/>
</dbReference>
<dbReference type="InterPro" id="IPR017927">
    <property type="entry name" value="FAD-bd_FR_type"/>
</dbReference>
<dbReference type="InterPro" id="IPR001709">
    <property type="entry name" value="Flavoprot_Pyr_Nucl_cyt_Rdtase"/>
</dbReference>
<dbReference type="InterPro" id="IPR039261">
    <property type="entry name" value="FNR_nucleotide-bd"/>
</dbReference>
<dbReference type="InterPro" id="IPR010205">
    <property type="entry name" value="NqrF"/>
</dbReference>
<dbReference type="InterPro" id="IPR001433">
    <property type="entry name" value="OxRdtase_FAD/NAD-bd"/>
</dbReference>
<dbReference type="InterPro" id="IPR017938">
    <property type="entry name" value="Riboflavin_synthase-like_b-brl"/>
</dbReference>
<dbReference type="NCBIfam" id="TIGR01941">
    <property type="entry name" value="nqrF"/>
    <property type="match status" value="1"/>
</dbReference>
<dbReference type="PANTHER" id="PTHR43644">
    <property type="entry name" value="NA(+)-TRANSLOCATING NADH-QUINONE REDUCTASE SUBUNIT"/>
    <property type="match status" value="1"/>
</dbReference>
<dbReference type="PANTHER" id="PTHR43644:SF1">
    <property type="entry name" value="NAD(P)H-FLAVIN REDUCTASE"/>
    <property type="match status" value="1"/>
</dbReference>
<dbReference type="Pfam" id="PF00970">
    <property type="entry name" value="FAD_binding_6"/>
    <property type="match status" value="1"/>
</dbReference>
<dbReference type="Pfam" id="PF00111">
    <property type="entry name" value="Fer2"/>
    <property type="match status" value="1"/>
</dbReference>
<dbReference type="Pfam" id="PF00175">
    <property type="entry name" value="NAD_binding_1"/>
    <property type="match status" value="1"/>
</dbReference>
<dbReference type="PIRSF" id="PIRSF000044">
    <property type="entry name" value="Cis_Diol_DH_RD"/>
    <property type="match status" value="1"/>
</dbReference>
<dbReference type="PRINTS" id="PR00371">
    <property type="entry name" value="FPNCR"/>
</dbReference>
<dbReference type="SUPFAM" id="SSF54292">
    <property type="entry name" value="2Fe-2S ferredoxin-like"/>
    <property type="match status" value="1"/>
</dbReference>
<dbReference type="SUPFAM" id="SSF52343">
    <property type="entry name" value="Ferredoxin reductase-like, C-terminal NADP-linked domain"/>
    <property type="match status" value="1"/>
</dbReference>
<dbReference type="SUPFAM" id="SSF63380">
    <property type="entry name" value="Riboflavin synthase domain-like"/>
    <property type="match status" value="1"/>
</dbReference>
<dbReference type="PROSITE" id="PS51085">
    <property type="entry name" value="2FE2S_FER_2"/>
    <property type="match status" value="1"/>
</dbReference>
<dbReference type="PROSITE" id="PS51384">
    <property type="entry name" value="FAD_FR"/>
    <property type="match status" value="1"/>
</dbReference>
<reference key="1">
    <citation type="journal article" date="2001" name="Proc. Natl. Acad. Sci. U.S.A.">
        <title>Complete genomic sequence of Pasteurella multocida Pm70.</title>
        <authorList>
            <person name="May B.J."/>
            <person name="Zhang Q."/>
            <person name="Li L.L."/>
            <person name="Paustian M.L."/>
            <person name="Whittam T.S."/>
            <person name="Kapur V."/>
        </authorList>
    </citation>
    <scope>NUCLEOTIDE SEQUENCE [LARGE SCALE GENOMIC DNA]</scope>
    <source>
        <strain>Pm70</strain>
    </source>
</reference>
<sequence length="407" mass="45253">MEITLGIAMFTVIVLALAVIILFAKSKLVNSGDITIEINDDPSKAIHLPAGGKLLGALASQGIFVSSACGGGGSCGQCIVKVTEGGGDILPTELSHISKREAKEGYRLSCQVNVKNSMKVELPEEVFGVKKWECTVISNDNKATFIKELKLAIPEGEEVPFRAGGYIQIEAEPHTVAYKDFDIPEEYHEDWDKYNLWRYVSKVDEHIIRAYSMASYPEEKGIIMLNVRIATPPPNNPDAPPGQMSSYIWSLKAGDKVTISGPFGEFFAKETDAEMVFVGGGAGMAPMRSHIFDQLKRLKSKRKMSFWYGARSKREMFYVEDFDTLQAENDNFVWHVALSDPQPGDNWDGYTGFIHNVLYENYLKDHEAPEDCEYYMCGPPIMNASVIKMLKDLGVEDENILLDDFGG</sequence>